<sequence length="547" mass="59846">MASGSSGGGYADEKGPGAATMQALGLQQQHGGGGEVEEESSEMGEKTAARTRLSGLLWHGGSAYDAWFSCASNQVAQVLLTLPYSFAQLGMASGLLFQLFYGLLGSWTAYLISILYLEYRTRKERDKVDFRNHVIQWFEVLDGLLGRHWRNVGLAFNCTFLLFGSVIQLIGCASNIYYINDHLDKRTWTYIFGACCATTVFIPSFHNYRIWSFLGLLMTTYTAWYIAVASLIHGQVEGVAHSGPTSIVLYFTGATNILYTFGGHAVTVEIMHAMWRPQKFKAIYLLATVYVLTLTLPSASAAYWAFGDALLTHSNALALLPRTPWRDAAVVLMLIHQFITFGFACTPLYFVWEKLVGLHGCPSLCKRAAARLPVVLPIWFLAIIFPFFGPINSAVGSLLVSFTVYIIPSLAYMVTFRSPQSRQNAVERPPRFAGGWTGAYVINSFVVAWVLVVGFGFGGWASITNFVHQVDTFGLFAKCYQCPPHPAAAALSPPGAIAPAPASMLPPFNSTAAGIFAAPVPSPAPAPAPMHFVLGHHHHHRHHRHGL</sequence>
<reference key="1">
    <citation type="journal article" date="2003" name="Science">
        <title>In-depth view of structure, activity, and evolution of rice chromosome 10.</title>
        <authorList>
            <person name="Yu Y."/>
            <person name="Rambo T."/>
            <person name="Currie J."/>
            <person name="Saski C."/>
            <person name="Kim H.-R."/>
            <person name="Collura K."/>
            <person name="Thompson S."/>
            <person name="Simmons J."/>
            <person name="Yang T.-J."/>
            <person name="Nah G."/>
            <person name="Patel A.J."/>
            <person name="Thurmond S."/>
            <person name="Henry D."/>
            <person name="Oates R."/>
            <person name="Palmer M."/>
            <person name="Pries G."/>
            <person name="Gibson J."/>
            <person name="Anderson H."/>
            <person name="Paradkar M."/>
            <person name="Crane L."/>
            <person name="Dale J."/>
            <person name="Carver M.B."/>
            <person name="Wood T."/>
            <person name="Frisch D."/>
            <person name="Engler F."/>
            <person name="Soderlund C."/>
            <person name="Palmer L.E."/>
            <person name="Teytelman L."/>
            <person name="Nascimento L."/>
            <person name="De la Bastide M."/>
            <person name="Spiegel L."/>
            <person name="Ware D."/>
            <person name="O'Shaughnessy A."/>
            <person name="Dike S."/>
            <person name="Dedhia N."/>
            <person name="Preston R."/>
            <person name="Huang E."/>
            <person name="Ferraro K."/>
            <person name="Kuit K."/>
            <person name="Miller B."/>
            <person name="Zutavern T."/>
            <person name="Katzenberger F."/>
            <person name="Muller S."/>
            <person name="Balija V."/>
            <person name="Martienssen R.A."/>
            <person name="Stein L."/>
            <person name="Minx P."/>
            <person name="Johnson D."/>
            <person name="Cordum H."/>
            <person name="Mardis E."/>
            <person name="Cheng Z."/>
            <person name="Jiang J."/>
            <person name="Wilson R."/>
            <person name="McCombie W.R."/>
            <person name="Wing R.A."/>
            <person name="Yuan Q."/>
            <person name="Ouyang S."/>
            <person name="Liu J."/>
            <person name="Jones K.M."/>
            <person name="Gansberger K."/>
            <person name="Moffat K."/>
            <person name="Hill J."/>
            <person name="Tsitrin T."/>
            <person name="Overton L."/>
            <person name="Bera J."/>
            <person name="Kim M."/>
            <person name="Jin S."/>
            <person name="Tallon L."/>
            <person name="Ciecko A."/>
            <person name="Pai G."/>
            <person name="Van Aken S."/>
            <person name="Utterback T."/>
            <person name="Reidmuller S."/>
            <person name="Bormann J."/>
            <person name="Feldblyum T."/>
            <person name="Hsiao J."/>
            <person name="Zismann V."/>
            <person name="Blunt S."/>
            <person name="de Vazeille A.R."/>
            <person name="Shaffer T."/>
            <person name="Koo H."/>
            <person name="Suh B."/>
            <person name="Yang Q."/>
            <person name="Haas B."/>
            <person name="Peterson J."/>
            <person name="Pertea M."/>
            <person name="Volfovsky N."/>
            <person name="Wortman J."/>
            <person name="White O."/>
            <person name="Salzberg S.L."/>
            <person name="Fraser C.M."/>
            <person name="Buell C.R."/>
            <person name="Messing J."/>
            <person name="Song R."/>
            <person name="Fuks G."/>
            <person name="Llaca V."/>
            <person name="Kovchak S."/>
            <person name="Young S."/>
            <person name="Bowers J.E."/>
            <person name="Paterson A.H."/>
            <person name="Johns M.A."/>
            <person name="Mao L."/>
            <person name="Pan H."/>
            <person name="Dean R.A."/>
        </authorList>
    </citation>
    <scope>NUCLEOTIDE SEQUENCE [LARGE SCALE GENOMIC DNA]</scope>
    <source>
        <strain>cv. Nipponbare</strain>
    </source>
</reference>
<reference key="2">
    <citation type="journal article" date="2005" name="Nature">
        <title>The map-based sequence of the rice genome.</title>
        <authorList>
            <consortium name="International rice genome sequencing project (IRGSP)"/>
        </authorList>
    </citation>
    <scope>NUCLEOTIDE SEQUENCE [LARGE SCALE GENOMIC DNA]</scope>
    <source>
        <strain>cv. Nipponbare</strain>
    </source>
</reference>
<reference key="3">
    <citation type="journal article" date="2008" name="Nucleic Acids Res.">
        <title>The rice annotation project database (RAP-DB): 2008 update.</title>
        <authorList>
            <consortium name="The rice annotation project (RAP)"/>
        </authorList>
    </citation>
    <scope>GENOME REANNOTATION</scope>
    <source>
        <strain>cv. Nipponbare</strain>
    </source>
</reference>
<reference key="4">
    <citation type="journal article" date="2013" name="Rice">
        <title>Improvement of the Oryza sativa Nipponbare reference genome using next generation sequence and optical map data.</title>
        <authorList>
            <person name="Kawahara Y."/>
            <person name="de la Bastide M."/>
            <person name="Hamilton J.P."/>
            <person name="Kanamori H."/>
            <person name="McCombie W.R."/>
            <person name="Ouyang S."/>
            <person name="Schwartz D.C."/>
            <person name="Tanaka T."/>
            <person name="Wu J."/>
            <person name="Zhou S."/>
            <person name="Childs K.L."/>
            <person name="Davidson R.M."/>
            <person name="Lin H."/>
            <person name="Quesada-Ocampo L."/>
            <person name="Vaillancourt B."/>
            <person name="Sakai H."/>
            <person name="Lee S.S."/>
            <person name="Kim J."/>
            <person name="Numa H."/>
            <person name="Itoh T."/>
            <person name="Buell C.R."/>
            <person name="Matsumoto T."/>
        </authorList>
    </citation>
    <scope>GENOME REANNOTATION</scope>
    <source>
        <strain>cv. Nipponbare</strain>
    </source>
</reference>
<reference key="5">
    <citation type="journal article" date="2005" name="PLoS Biol.">
        <title>The genomes of Oryza sativa: a history of duplications.</title>
        <authorList>
            <person name="Yu J."/>
            <person name="Wang J."/>
            <person name="Lin W."/>
            <person name="Li S."/>
            <person name="Li H."/>
            <person name="Zhou J."/>
            <person name="Ni P."/>
            <person name="Dong W."/>
            <person name="Hu S."/>
            <person name="Zeng C."/>
            <person name="Zhang J."/>
            <person name="Zhang Y."/>
            <person name="Li R."/>
            <person name="Xu Z."/>
            <person name="Li S."/>
            <person name="Li X."/>
            <person name="Zheng H."/>
            <person name="Cong L."/>
            <person name="Lin L."/>
            <person name="Yin J."/>
            <person name="Geng J."/>
            <person name="Li G."/>
            <person name="Shi J."/>
            <person name="Liu J."/>
            <person name="Lv H."/>
            <person name="Li J."/>
            <person name="Wang J."/>
            <person name="Deng Y."/>
            <person name="Ran L."/>
            <person name="Shi X."/>
            <person name="Wang X."/>
            <person name="Wu Q."/>
            <person name="Li C."/>
            <person name="Ren X."/>
            <person name="Wang J."/>
            <person name="Wang X."/>
            <person name="Li D."/>
            <person name="Liu D."/>
            <person name="Zhang X."/>
            <person name="Ji Z."/>
            <person name="Zhao W."/>
            <person name="Sun Y."/>
            <person name="Zhang Z."/>
            <person name="Bao J."/>
            <person name="Han Y."/>
            <person name="Dong L."/>
            <person name="Ji J."/>
            <person name="Chen P."/>
            <person name="Wu S."/>
            <person name="Liu J."/>
            <person name="Xiao Y."/>
            <person name="Bu D."/>
            <person name="Tan J."/>
            <person name="Yang L."/>
            <person name="Ye C."/>
            <person name="Zhang J."/>
            <person name="Xu J."/>
            <person name="Zhou Y."/>
            <person name="Yu Y."/>
            <person name="Zhang B."/>
            <person name="Zhuang S."/>
            <person name="Wei H."/>
            <person name="Liu B."/>
            <person name="Lei M."/>
            <person name="Yu H."/>
            <person name="Li Y."/>
            <person name="Xu H."/>
            <person name="Wei S."/>
            <person name="He X."/>
            <person name="Fang L."/>
            <person name="Zhang Z."/>
            <person name="Zhang Y."/>
            <person name="Huang X."/>
            <person name="Su Z."/>
            <person name="Tong W."/>
            <person name="Li J."/>
            <person name="Tong Z."/>
            <person name="Li S."/>
            <person name="Ye J."/>
            <person name="Wang L."/>
            <person name="Fang L."/>
            <person name="Lei T."/>
            <person name="Chen C.-S."/>
            <person name="Chen H.-C."/>
            <person name="Xu Z."/>
            <person name="Li H."/>
            <person name="Huang H."/>
            <person name="Zhang F."/>
            <person name="Xu H."/>
            <person name="Li N."/>
            <person name="Zhao C."/>
            <person name="Li S."/>
            <person name="Dong L."/>
            <person name="Huang Y."/>
            <person name="Li L."/>
            <person name="Xi Y."/>
            <person name="Qi Q."/>
            <person name="Li W."/>
            <person name="Zhang B."/>
            <person name="Hu W."/>
            <person name="Zhang Y."/>
            <person name="Tian X."/>
            <person name="Jiao Y."/>
            <person name="Liang X."/>
            <person name="Jin J."/>
            <person name="Gao L."/>
            <person name="Zheng W."/>
            <person name="Hao B."/>
            <person name="Liu S.-M."/>
            <person name="Wang W."/>
            <person name="Yuan L."/>
            <person name="Cao M."/>
            <person name="McDermott J."/>
            <person name="Samudrala R."/>
            <person name="Wang J."/>
            <person name="Wong G.K.-S."/>
            <person name="Yang H."/>
        </authorList>
    </citation>
    <scope>NUCLEOTIDE SEQUENCE [LARGE SCALE GENOMIC DNA]</scope>
    <source>
        <strain>cv. Nipponbare</strain>
    </source>
</reference>
<reference key="6">
    <citation type="journal article" date="2003" name="Science">
        <title>Collection, mapping, and annotation of over 28,000 cDNA clones from japonica rice.</title>
        <authorList>
            <consortium name="The rice full-length cDNA consortium"/>
        </authorList>
    </citation>
    <scope>NUCLEOTIDE SEQUENCE [LARGE SCALE MRNA]</scope>
    <source>
        <strain>cv. Nipponbare</strain>
    </source>
</reference>
<evidence type="ECO:0000250" key="1"/>
<evidence type="ECO:0000255" key="2"/>
<evidence type="ECO:0000305" key="3"/>
<evidence type="ECO:0000312" key="4">
    <source>
        <dbReference type="EMBL" id="EAZ15304.1"/>
    </source>
</evidence>
<dbReference type="EMBL" id="AC091665">
    <property type="protein sequence ID" value="AAK91876.1"/>
    <property type="molecule type" value="Genomic_DNA"/>
</dbReference>
<dbReference type="EMBL" id="DP000086">
    <property type="protein sequence ID" value="AAP52113.1"/>
    <property type="molecule type" value="Genomic_DNA"/>
</dbReference>
<dbReference type="EMBL" id="AP008216">
    <property type="protein sequence ID" value="BAF26075.1"/>
    <property type="molecule type" value="Genomic_DNA"/>
</dbReference>
<dbReference type="EMBL" id="AP014966">
    <property type="protein sequence ID" value="BAT09885.1"/>
    <property type="molecule type" value="Genomic_DNA"/>
</dbReference>
<dbReference type="EMBL" id="CM000147">
    <property type="protein sequence ID" value="EAZ15304.1"/>
    <property type="molecule type" value="Genomic_DNA"/>
</dbReference>
<dbReference type="EMBL" id="AK102295">
    <property type="protein sequence ID" value="BAG95486.1"/>
    <property type="molecule type" value="mRNA"/>
</dbReference>
<dbReference type="EMBL" id="AK102729">
    <property type="protein sequence ID" value="BAG95694.1"/>
    <property type="molecule type" value="mRNA"/>
</dbReference>
<dbReference type="RefSeq" id="XP_015614784.1">
    <property type="nucleotide sequence ID" value="XM_015759298.1"/>
</dbReference>
<dbReference type="SMR" id="Q7XGU4"/>
<dbReference type="FunCoup" id="Q7XGU4">
    <property type="interactions" value="1"/>
</dbReference>
<dbReference type="STRING" id="39947.Q7XGU4"/>
<dbReference type="PaxDb" id="39947-Q7XGU4"/>
<dbReference type="EnsemblPlants" id="Os10t0147400-01">
    <property type="protein sequence ID" value="Os10t0147400-01"/>
    <property type="gene ID" value="Os10g0147400"/>
</dbReference>
<dbReference type="Gramene" id="Os10t0147400-01">
    <property type="protein sequence ID" value="Os10t0147400-01"/>
    <property type="gene ID" value="Os10g0147400"/>
</dbReference>
<dbReference type="KEGG" id="dosa:Os10g0147400"/>
<dbReference type="eggNOG" id="KOG1303">
    <property type="taxonomic scope" value="Eukaryota"/>
</dbReference>
<dbReference type="HOGENOM" id="CLU_027994_2_0_1"/>
<dbReference type="InParanoid" id="Q7XGU4"/>
<dbReference type="OMA" id="WIGAYTI"/>
<dbReference type="OrthoDB" id="40134at2759"/>
<dbReference type="Proteomes" id="UP000000763">
    <property type="component" value="Chromosome 10"/>
</dbReference>
<dbReference type="Proteomes" id="UP000007752">
    <property type="component" value="Chromosome 10"/>
</dbReference>
<dbReference type="Proteomes" id="UP000059680">
    <property type="component" value="Chromosome 10"/>
</dbReference>
<dbReference type="ExpressionAtlas" id="Q7XGU4">
    <property type="expression patterns" value="baseline and differential"/>
</dbReference>
<dbReference type="GO" id="GO:0016020">
    <property type="term" value="C:membrane"/>
    <property type="evidence" value="ECO:0000318"/>
    <property type="project" value="GO_Central"/>
</dbReference>
<dbReference type="GO" id="GO:0005886">
    <property type="term" value="C:plasma membrane"/>
    <property type="evidence" value="ECO:0007669"/>
    <property type="project" value="UniProtKB-SubCell"/>
</dbReference>
<dbReference type="GO" id="GO:0015171">
    <property type="term" value="F:amino acid transmembrane transporter activity"/>
    <property type="evidence" value="ECO:0000318"/>
    <property type="project" value="GO_Central"/>
</dbReference>
<dbReference type="GO" id="GO:0015293">
    <property type="term" value="F:symporter activity"/>
    <property type="evidence" value="ECO:0007669"/>
    <property type="project" value="UniProtKB-KW"/>
</dbReference>
<dbReference type="GO" id="GO:0003333">
    <property type="term" value="P:amino acid transmembrane transport"/>
    <property type="evidence" value="ECO:0000318"/>
    <property type="project" value="GO_Central"/>
</dbReference>
<dbReference type="GO" id="GO:0009734">
    <property type="term" value="P:auxin-activated signaling pathway"/>
    <property type="evidence" value="ECO:0007669"/>
    <property type="project" value="UniProtKB-KW"/>
</dbReference>
<dbReference type="InterPro" id="IPR013057">
    <property type="entry name" value="AA_transpt_TM"/>
</dbReference>
<dbReference type="PANTHER" id="PTHR48017">
    <property type="entry name" value="OS05G0424000 PROTEIN-RELATED"/>
    <property type="match status" value="1"/>
</dbReference>
<dbReference type="Pfam" id="PF01490">
    <property type="entry name" value="Aa_trans"/>
    <property type="match status" value="1"/>
</dbReference>
<proteinExistence type="evidence at transcript level"/>
<protein>
    <recommendedName>
        <fullName>Auxin transporter-like protein 3</fullName>
    </recommendedName>
</protein>
<organism>
    <name type="scientific">Oryza sativa subsp. japonica</name>
    <name type="common">Rice</name>
    <dbReference type="NCBI Taxonomy" id="39947"/>
    <lineage>
        <taxon>Eukaryota</taxon>
        <taxon>Viridiplantae</taxon>
        <taxon>Streptophyta</taxon>
        <taxon>Embryophyta</taxon>
        <taxon>Tracheophyta</taxon>
        <taxon>Spermatophyta</taxon>
        <taxon>Magnoliopsida</taxon>
        <taxon>Liliopsida</taxon>
        <taxon>Poales</taxon>
        <taxon>Poaceae</taxon>
        <taxon>BOP clade</taxon>
        <taxon>Oryzoideae</taxon>
        <taxon>Oryzeae</taxon>
        <taxon>Oryzinae</taxon>
        <taxon>Oryza</taxon>
        <taxon>Oryza sativa</taxon>
    </lineage>
</organism>
<accession>Q7XGU4</accession>
<accession>A3C2J1</accession>
<accession>Q0IYZ0</accession>
<accession>Q94GC1</accession>
<gene>
    <name type="ordered locus">Os10g0147400</name>
    <name type="ordered locus">LOC_Os10g05690</name>
    <name evidence="4" type="ORF">OsJ_30723</name>
    <name type="ORF">OSJNBb0016M10.2</name>
</gene>
<feature type="chain" id="PRO_0000093852" description="Auxin transporter-like protein 3">
    <location>
        <begin position="1"/>
        <end position="547"/>
    </location>
</feature>
<feature type="topological domain" description="Cytoplasmic" evidence="2">
    <location>
        <begin position="1"/>
        <end position="74"/>
    </location>
</feature>
<feature type="transmembrane region" description="Helical" evidence="2">
    <location>
        <begin position="75"/>
        <end position="92"/>
    </location>
</feature>
<feature type="topological domain" description="Extracellular" evidence="2">
    <location>
        <begin position="93"/>
        <end position="94"/>
    </location>
</feature>
<feature type="transmembrane region" description="Helical" evidence="2">
    <location>
        <begin position="95"/>
        <end position="115"/>
    </location>
</feature>
<feature type="topological domain" description="Cytoplasmic" evidence="2">
    <location>
        <begin position="116"/>
        <end position="151"/>
    </location>
</feature>
<feature type="transmembrane region" description="Helical" evidence="2">
    <location>
        <begin position="152"/>
        <end position="172"/>
    </location>
</feature>
<feature type="topological domain" description="Extracellular" evidence="2">
    <location>
        <begin position="173"/>
        <end position="187"/>
    </location>
</feature>
<feature type="transmembrane region" description="Helical" evidence="2">
    <location>
        <begin position="188"/>
        <end position="208"/>
    </location>
</feature>
<feature type="topological domain" description="Cytoplasmic" evidence="2">
    <location>
        <begin position="209"/>
        <end position="211"/>
    </location>
</feature>
<feature type="transmembrane region" description="Helical" evidence="2">
    <location>
        <begin position="212"/>
        <end position="232"/>
    </location>
</feature>
<feature type="topological domain" description="Extracellular" evidence="2">
    <location>
        <begin position="233"/>
        <end position="247"/>
    </location>
</feature>
<feature type="transmembrane region" description="Helical" evidence="2">
    <location>
        <begin position="248"/>
        <end position="268"/>
    </location>
</feature>
<feature type="topological domain" description="Cytoplasmic" evidence="2">
    <location>
        <begin position="269"/>
        <end position="281"/>
    </location>
</feature>
<feature type="transmembrane region" description="Helical" evidence="2">
    <location>
        <begin position="282"/>
        <end position="302"/>
    </location>
</feature>
<feature type="topological domain" description="Extracellular" evidence="2">
    <location>
        <begin position="303"/>
        <end position="329"/>
    </location>
</feature>
<feature type="transmembrane region" description="Helical" evidence="2">
    <location>
        <begin position="330"/>
        <end position="350"/>
    </location>
</feature>
<feature type="topological domain" description="Cytoplasmic" evidence="2">
    <location>
        <begin position="351"/>
        <end position="371"/>
    </location>
</feature>
<feature type="transmembrane region" description="Helical" evidence="2">
    <location>
        <begin position="372"/>
        <end position="392"/>
    </location>
</feature>
<feature type="topological domain" description="Extracellular" evidence="2">
    <location>
        <position position="393"/>
    </location>
</feature>
<feature type="transmembrane region" description="Helical" evidence="2">
    <location>
        <begin position="394"/>
        <end position="414"/>
    </location>
</feature>
<feature type="topological domain" description="Cytoplasmic" evidence="2">
    <location>
        <begin position="415"/>
        <end position="440"/>
    </location>
</feature>
<feature type="transmembrane region" description="Helical" evidence="2">
    <location>
        <begin position="441"/>
        <end position="461"/>
    </location>
</feature>
<feature type="topological domain" description="Extracellular" evidence="2">
    <location>
        <begin position="462"/>
        <end position="547"/>
    </location>
</feature>
<feature type="glycosylation site" description="N-linked (GlcNAc...) asparagine" evidence="2">
    <location>
        <position position="509"/>
    </location>
</feature>
<keyword id="KW-0029">Amino-acid transport</keyword>
<keyword id="KW-0927">Auxin signaling pathway</keyword>
<keyword id="KW-1003">Cell membrane</keyword>
<keyword id="KW-0325">Glycoprotein</keyword>
<keyword id="KW-0472">Membrane</keyword>
<keyword id="KW-1185">Reference proteome</keyword>
<keyword id="KW-0769">Symport</keyword>
<keyword id="KW-0812">Transmembrane</keyword>
<keyword id="KW-1133">Transmembrane helix</keyword>
<keyword id="KW-0813">Transport</keyword>
<comment type="function">
    <text evidence="1">Carrier protein involved in proton-driven auxin influx. May mediate the formation of auxin gradient from developing leaves (site of auxin biosynthesis) to tips (By similarity).</text>
</comment>
<comment type="subcellular location">
    <subcellularLocation>
        <location evidence="1">Cell membrane</location>
        <topology evidence="1">Multi-pass membrane protein</topology>
    </subcellularLocation>
</comment>
<comment type="similarity">
    <text evidence="3">Belongs to the amino acid/polyamine transporter 2 family. Amino acid/auxin permease (AAAP) (TC 2.A.18.1) subfamily.</text>
</comment>
<name>LAX13_ORYSJ</name>